<proteinExistence type="inferred from homology"/>
<dbReference type="EC" id="3.1.3.-" evidence="1"/>
<dbReference type="EMBL" id="CU928161">
    <property type="protein sequence ID" value="CAR03681.1"/>
    <property type="molecule type" value="Genomic_DNA"/>
</dbReference>
<dbReference type="RefSeq" id="WP_000879110.1">
    <property type="nucleotide sequence ID" value="NC_011742.1"/>
</dbReference>
<dbReference type="SMR" id="B7MG19"/>
<dbReference type="KEGG" id="ecz:ECS88_2401"/>
<dbReference type="HOGENOM" id="CLU_106705_1_0_6"/>
<dbReference type="UniPathway" id="UPA00451"/>
<dbReference type="Proteomes" id="UP000000747">
    <property type="component" value="Chromosome"/>
</dbReference>
<dbReference type="GO" id="GO:0042597">
    <property type="term" value="C:periplasmic space"/>
    <property type="evidence" value="ECO:0007669"/>
    <property type="project" value="UniProtKB-SubCell"/>
</dbReference>
<dbReference type="GO" id="GO:0016791">
    <property type="term" value="F:phosphatase activity"/>
    <property type="evidence" value="ECO:0007669"/>
    <property type="project" value="UniProtKB-UniRule"/>
</dbReference>
<dbReference type="GO" id="GO:0008653">
    <property type="term" value="P:lipopolysaccharide metabolic process"/>
    <property type="evidence" value="ECO:0007669"/>
    <property type="project" value="UniProtKB-UniRule"/>
</dbReference>
<dbReference type="CDD" id="cd07040">
    <property type="entry name" value="HP"/>
    <property type="match status" value="1"/>
</dbReference>
<dbReference type="Gene3D" id="3.40.50.1240">
    <property type="entry name" value="Phosphoglycerate mutase-like"/>
    <property type="match status" value="1"/>
</dbReference>
<dbReference type="HAMAP" id="MF_01868">
    <property type="entry name" value="Ais"/>
    <property type="match status" value="1"/>
</dbReference>
<dbReference type="InterPro" id="IPR013078">
    <property type="entry name" value="His_Pase_superF_clade-1"/>
</dbReference>
<dbReference type="InterPro" id="IPR029033">
    <property type="entry name" value="His_PPase_superfam"/>
</dbReference>
<dbReference type="InterPro" id="IPR011310">
    <property type="entry name" value="LipoPS_heptP_Pase"/>
</dbReference>
<dbReference type="NCBIfam" id="NF011945">
    <property type="entry name" value="PRK15416.1"/>
    <property type="match status" value="1"/>
</dbReference>
<dbReference type="Pfam" id="PF00300">
    <property type="entry name" value="His_Phos_1"/>
    <property type="match status" value="1"/>
</dbReference>
<dbReference type="PIRSF" id="PIRSF011416">
    <property type="entry name" value="Ais-TraG-AfrS"/>
    <property type="match status" value="1"/>
</dbReference>
<dbReference type="SUPFAM" id="SSF53254">
    <property type="entry name" value="Phosphoglycerate mutase-like"/>
    <property type="match status" value="1"/>
</dbReference>
<gene>
    <name evidence="1" type="primary">ais</name>
    <name type="ordered locus">ECS88_2401</name>
</gene>
<sequence length="200" mass="22394">MLAFCRSSLKSKKYFIILLALAAIAGLGTHAAWSSNGLPRIDNKTLARLAQQHPVVVLFRHAERCDRSTNQCLSDKTGITVKGTQDARELGNAFSADIPDFDLYSSNTVRTIQSATWFSAGKKLTVDKRFLQCGNEIYSAIKDLQRKAPDKNIVIFTHNHCLTYIAKDKRDATFKPDYLDGLVMHVEKGKVYLDGEFVNH</sequence>
<keyword id="KW-0378">Hydrolase</keyword>
<keyword id="KW-0574">Periplasm</keyword>
<keyword id="KW-1185">Reference proteome</keyword>
<keyword id="KW-0732">Signal</keyword>
<evidence type="ECO:0000255" key="1">
    <source>
        <dbReference type="HAMAP-Rule" id="MF_01868"/>
    </source>
</evidence>
<comment type="function">
    <text evidence="1">Catalyzes the dephosphorylation of heptose(II) of the outer membrane lipopolysaccharide core.</text>
</comment>
<comment type="pathway">
    <text evidence="1">Bacterial outer membrane biogenesis; lipopolysaccharide metabolism.</text>
</comment>
<comment type="subcellular location">
    <subcellularLocation>
        <location evidence="1">Periplasm</location>
    </subcellularLocation>
</comment>
<comment type="similarity">
    <text evidence="1">Belongs to the phosphoglycerate mutase family. Ais subfamily.</text>
</comment>
<protein>
    <recommendedName>
        <fullName evidence="1">Lipopolysaccharide core heptose(II)-phosphate phosphatase</fullName>
        <ecNumber evidence="1">3.1.3.-</ecNumber>
    </recommendedName>
</protein>
<feature type="signal peptide" evidence="1">
    <location>
        <begin position="1"/>
        <end position="25"/>
    </location>
</feature>
<feature type="chain" id="PRO_0000380566" description="Lipopolysaccharide core heptose(II)-phosphate phosphatase">
    <location>
        <begin position="26"/>
        <end position="200"/>
    </location>
</feature>
<organism>
    <name type="scientific">Escherichia coli O45:K1 (strain S88 / ExPEC)</name>
    <dbReference type="NCBI Taxonomy" id="585035"/>
    <lineage>
        <taxon>Bacteria</taxon>
        <taxon>Pseudomonadati</taxon>
        <taxon>Pseudomonadota</taxon>
        <taxon>Gammaproteobacteria</taxon>
        <taxon>Enterobacterales</taxon>
        <taxon>Enterobacteriaceae</taxon>
        <taxon>Escherichia</taxon>
    </lineage>
</organism>
<accession>B7MG19</accession>
<reference key="1">
    <citation type="journal article" date="2009" name="PLoS Genet.">
        <title>Organised genome dynamics in the Escherichia coli species results in highly diverse adaptive paths.</title>
        <authorList>
            <person name="Touchon M."/>
            <person name="Hoede C."/>
            <person name="Tenaillon O."/>
            <person name="Barbe V."/>
            <person name="Baeriswyl S."/>
            <person name="Bidet P."/>
            <person name="Bingen E."/>
            <person name="Bonacorsi S."/>
            <person name="Bouchier C."/>
            <person name="Bouvet O."/>
            <person name="Calteau A."/>
            <person name="Chiapello H."/>
            <person name="Clermont O."/>
            <person name="Cruveiller S."/>
            <person name="Danchin A."/>
            <person name="Diard M."/>
            <person name="Dossat C."/>
            <person name="Karoui M.E."/>
            <person name="Frapy E."/>
            <person name="Garry L."/>
            <person name="Ghigo J.M."/>
            <person name="Gilles A.M."/>
            <person name="Johnson J."/>
            <person name="Le Bouguenec C."/>
            <person name="Lescat M."/>
            <person name="Mangenot S."/>
            <person name="Martinez-Jehanne V."/>
            <person name="Matic I."/>
            <person name="Nassif X."/>
            <person name="Oztas S."/>
            <person name="Petit M.A."/>
            <person name="Pichon C."/>
            <person name="Rouy Z."/>
            <person name="Ruf C.S."/>
            <person name="Schneider D."/>
            <person name="Tourret J."/>
            <person name="Vacherie B."/>
            <person name="Vallenet D."/>
            <person name="Medigue C."/>
            <person name="Rocha E.P.C."/>
            <person name="Denamur E."/>
        </authorList>
    </citation>
    <scope>NUCLEOTIDE SEQUENCE [LARGE SCALE GENOMIC DNA]</scope>
    <source>
        <strain>S88 / ExPEC</strain>
    </source>
</reference>
<name>AIS_ECO45</name>